<accession>O94689</accession>
<organism>
    <name type="scientific">Schizosaccharomyces pombe (strain 972 / ATCC 24843)</name>
    <name type="common">Fission yeast</name>
    <dbReference type="NCBI Taxonomy" id="284812"/>
    <lineage>
        <taxon>Eukaryota</taxon>
        <taxon>Fungi</taxon>
        <taxon>Dikarya</taxon>
        <taxon>Ascomycota</taxon>
        <taxon>Taphrinomycotina</taxon>
        <taxon>Schizosaccharomycetes</taxon>
        <taxon>Schizosaccharomycetales</taxon>
        <taxon>Schizosaccharomycetaceae</taxon>
        <taxon>Schizosaccharomyces</taxon>
    </lineage>
</organism>
<reference key="1">
    <citation type="journal article" date="2002" name="Nature">
        <title>The genome sequence of Schizosaccharomyces pombe.</title>
        <authorList>
            <person name="Wood V."/>
            <person name="Gwilliam R."/>
            <person name="Rajandream M.A."/>
            <person name="Lyne M.H."/>
            <person name="Lyne R."/>
            <person name="Stewart A."/>
            <person name="Sgouros J.G."/>
            <person name="Peat N."/>
            <person name="Hayles J."/>
            <person name="Baker S.G."/>
            <person name="Basham D."/>
            <person name="Bowman S."/>
            <person name="Brooks K."/>
            <person name="Brown D."/>
            <person name="Brown S."/>
            <person name="Chillingworth T."/>
            <person name="Churcher C.M."/>
            <person name="Collins M."/>
            <person name="Connor R."/>
            <person name="Cronin A."/>
            <person name="Davis P."/>
            <person name="Feltwell T."/>
            <person name="Fraser A."/>
            <person name="Gentles S."/>
            <person name="Goble A."/>
            <person name="Hamlin N."/>
            <person name="Harris D.E."/>
            <person name="Hidalgo J."/>
            <person name="Hodgson G."/>
            <person name="Holroyd S."/>
            <person name="Hornsby T."/>
            <person name="Howarth S."/>
            <person name="Huckle E.J."/>
            <person name="Hunt S."/>
            <person name="Jagels K."/>
            <person name="James K.D."/>
            <person name="Jones L."/>
            <person name="Jones M."/>
            <person name="Leather S."/>
            <person name="McDonald S."/>
            <person name="McLean J."/>
            <person name="Mooney P."/>
            <person name="Moule S."/>
            <person name="Mungall K.L."/>
            <person name="Murphy L.D."/>
            <person name="Niblett D."/>
            <person name="Odell C."/>
            <person name="Oliver K."/>
            <person name="O'Neil S."/>
            <person name="Pearson D."/>
            <person name="Quail M.A."/>
            <person name="Rabbinowitsch E."/>
            <person name="Rutherford K.M."/>
            <person name="Rutter S."/>
            <person name="Saunders D."/>
            <person name="Seeger K."/>
            <person name="Sharp S."/>
            <person name="Skelton J."/>
            <person name="Simmonds M.N."/>
            <person name="Squares R."/>
            <person name="Squares S."/>
            <person name="Stevens K."/>
            <person name="Taylor K."/>
            <person name="Taylor R.G."/>
            <person name="Tivey A."/>
            <person name="Walsh S.V."/>
            <person name="Warren T."/>
            <person name="Whitehead S."/>
            <person name="Woodward J.R."/>
            <person name="Volckaert G."/>
            <person name="Aert R."/>
            <person name="Robben J."/>
            <person name="Grymonprez B."/>
            <person name="Weltjens I."/>
            <person name="Vanstreels E."/>
            <person name="Rieger M."/>
            <person name="Schaefer M."/>
            <person name="Mueller-Auer S."/>
            <person name="Gabel C."/>
            <person name="Fuchs M."/>
            <person name="Duesterhoeft A."/>
            <person name="Fritzc C."/>
            <person name="Holzer E."/>
            <person name="Moestl D."/>
            <person name="Hilbert H."/>
            <person name="Borzym K."/>
            <person name="Langer I."/>
            <person name="Beck A."/>
            <person name="Lehrach H."/>
            <person name="Reinhardt R."/>
            <person name="Pohl T.M."/>
            <person name="Eger P."/>
            <person name="Zimmermann W."/>
            <person name="Wedler H."/>
            <person name="Wambutt R."/>
            <person name="Purnelle B."/>
            <person name="Goffeau A."/>
            <person name="Cadieu E."/>
            <person name="Dreano S."/>
            <person name="Gloux S."/>
            <person name="Lelaure V."/>
            <person name="Mottier S."/>
            <person name="Galibert F."/>
            <person name="Aves S.J."/>
            <person name="Xiang Z."/>
            <person name="Hunt C."/>
            <person name="Moore K."/>
            <person name="Hurst S.M."/>
            <person name="Lucas M."/>
            <person name="Rochet M."/>
            <person name="Gaillardin C."/>
            <person name="Tallada V.A."/>
            <person name="Garzon A."/>
            <person name="Thode G."/>
            <person name="Daga R.R."/>
            <person name="Cruzado L."/>
            <person name="Jimenez J."/>
            <person name="Sanchez M."/>
            <person name="del Rey F."/>
            <person name="Benito J."/>
            <person name="Dominguez A."/>
            <person name="Revuelta J.L."/>
            <person name="Moreno S."/>
            <person name="Armstrong J."/>
            <person name="Forsburg S.L."/>
            <person name="Cerutti L."/>
            <person name="Lowe T."/>
            <person name="McCombie W.R."/>
            <person name="Paulsen I."/>
            <person name="Potashkin J."/>
            <person name="Shpakovski G.V."/>
            <person name="Ussery D."/>
            <person name="Barrell B.G."/>
            <person name="Nurse P."/>
        </authorList>
    </citation>
    <scope>NUCLEOTIDE SEQUENCE [LARGE SCALE GENOMIC DNA]</scope>
    <source>
        <strain>972 / ATCC 24843</strain>
    </source>
</reference>
<feature type="transit peptide" description="Mitochondrion" evidence="2">
    <location>
        <begin position="1"/>
        <end position="29"/>
    </location>
</feature>
<feature type="chain" id="PRO_0000343131" description="Mitochondrial escape protein 2">
    <location>
        <begin position="30"/>
        <end position="773"/>
    </location>
</feature>
<feature type="topological domain" description="Mitochondrial matrix" evidence="2">
    <location>
        <begin position="30"/>
        <end position="249"/>
    </location>
</feature>
<feature type="transmembrane region" description="Helical" evidence="2">
    <location>
        <begin position="250"/>
        <end position="270"/>
    </location>
</feature>
<feature type="topological domain" description="Mitochondrial intermembrane" evidence="2">
    <location>
        <begin position="271"/>
        <end position="773"/>
    </location>
</feature>
<feature type="domain" description="RRM">
    <location>
        <begin position="163"/>
        <end position="234"/>
    </location>
</feature>
<dbReference type="EMBL" id="CU329671">
    <property type="protein sequence ID" value="CAB36867.1"/>
    <property type="molecule type" value="Genomic_DNA"/>
</dbReference>
<dbReference type="PIR" id="T40694">
    <property type="entry name" value="T40694"/>
</dbReference>
<dbReference type="RefSeq" id="NP_595637.1">
    <property type="nucleotide sequence ID" value="NM_001021531.2"/>
</dbReference>
<dbReference type="BioGRID" id="277264">
    <property type="interactions" value="15"/>
</dbReference>
<dbReference type="FunCoup" id="O94689">
    <property type="interactions" value="8"/>
</dbReference>
<dbReference type="STRING" id="284812.O94689"/>
<dbReference type="PaxDb" id="4896-SPBC83.05.1"/>
<dbReference type="EnsemblFungi" id="SPBC83.05.1">
    <property type="protein sequence ID" value="SPBC83.05.1:pep"/>
    <property type="gene ID" value="SPBC83.05"/>
</dbReference>
<dbReference type="GeneID" id="2540741"/>
<dbReference type="KEGG" id="spo:2540741"/>
<dbReference type="PomBase" id="SPBC83.05"/>
<dbReference type="VEuPathDB" id="FungiDB:SPBC83.05"/>
<dbReference type="eggNOG" id="ENOG502QS0P">
    <property type="taxonomic scope" value="Eukaryota"/>
</dbReference>
<dbReference type="HOGENOM" id="CLU_007861_0_0_1"/>
<dbReference type="InParanoid" id="O94689"/>
<dbReference type="OMA" id="FQFFRPY"/>
<dbReference type="PhylomeDB" id="O94689"/>
<dbReference type="PRO" id="PR:O94689"/>
<dbReference type="Proteomes" id="UP000002485">
    <property type="component" value="Chromosome II"/>
</dbReference>
<dbReference type="GO" id="GO:0005737">
    <property type="term" value="C:cytoplasm"/>
    <property type="evidence" value="ECO:0007005"/>
    <property type="project" value="PomBase"/>
</dbReference>
<dbReference type="GO" id="GO:0005743">
    <property type="term" value="C:mitochondrial inner membrane"/>
    <property type="evidence" value="ECO:0000318"/>
    <property type="project" value="GO_Central"/>
</dbReference>
<dbReference type="GO" id="GO:0003723">
    <property type="term" value="F:RNA binding"/>
    <property type="evidence" value="ECO:0000303"/>
    <property type="project" value="PomBase"/>
</dbReference>
<dbReference type="GO" id="GO:0000002">
    <property type="term" value="P:mitochondrial genome maintenance"/>
    <property type="evidence" value="ECO:0000318"/>
    <property type="project" value="GO_Central"/>
</dbReference>
<dbReference type="CDD" id="cd12433">
    <property type="entry name" value="RRM_Yme2p_like"/>
    <property type="match status" value="1"/>
</dbReference>
<dbReference type="Gene3D" id="3.30.70.330">
    <property type="match status" value="1"/>
</dbReference>
<dbReference type="Gene3D" id="3.40.50.300">
    <property type="entry name" value="P-loop containing nucleotide triphosphate hydrolases"/>
    <property type="match status" value="1"/>
</dbReference>
<dbReference type="InterPro" id="IPR018850">
    <property type="entry name" value="Mt_escape_2_C"/>
</dbReference>
<dbReference type="InterPro" id="IPR012677">
    <property type="entry name" value="Nucleotide-bd_a/b_plait_sf"/>
</dbReference>
<dbReference type="InterPro" id="IPR027417">
    <property type="entry name" value="P-loop_NTPase"/>
</dbReference>
<dbReference type="InterPro" id="IPR035979">
    <property type="entry name" value="RBD_domain_sf"/>
</dbReference>
<dbReference type="InterPro" id="IPR000504">
    <property type="entry name" value="RRM_dom"/>
</dbReference>
<dbReference type="InterPro" id="IPR039627">
    <property type="entry name" value="Yme2_C"/>
</dbReference>
<dbReference type="InterPro" id="IPR034260">
    <property type="entry name" value="Yme2_RRM"/>
</dbReference>
<dbReference type="PANTHER" id="PTHR32198">
    <property type="entry name" value="MITOCHONDRIAL ESCAPE PROTEIN 2"/>
    <property type="match status" value="1"/>
</dbReference>
<dbReference type="PANTHER" id="PTHR32198:SF2">
    <property type="entry name" value="MITOCHONDRIAL ESCAPE PROTEIN 2"/>
    <property type="match status" value="1"/>
</dbReference>
<dbReference type="Pfam" id="PF10443">
    <property type="entry name" value="RNA12"/>
    <property type="match status" value="1"/>
</dbReference>
<dbReference type="Pfam" id="PF00076">
    <property type="entry name" value="RRM_1"/>
    <property type="match status" value="1"/>
</dbReference>
<dbReference type="SUPFAM" id="SSF52540">
    <property type="entry name" value="P-loop containing nucleoside triphosphate hydrolases"/>
    <property type="match status" value="1"/>
</dbReference>
<dbReference type="SUPFAM" id="SSF54928">
    <property type="entry name" value="RNA-binding domain, RBD"/>
    <property type="match status" value="1"/>
</dbReference>
<keyword id="KW-0472">Membrane</keyword>
<keyword id="KW-0496">Mitochondrion</keyword>
<keyword id="KW-0999">Mitochondrion inner membrane</keyword>
<keyword id="KW-1185">Reference proteome</keyword>
<keyword id="KW-0809">Transit peptide</keyword>
<keyword id="KW-0812">Transmembrane</keyword>
<keyword id="KW-1133">Transmembrane helix</keyword>
<gene>
    <name type="primary">yme2</name>
    <name type="ORF">SPBC83.05</name>
</gene>
<name>YME2_SCHPO</name>
<comment type="function">
    <text evidence="1">Plays a role in maintaining the mitochondrial genome and in controlling the mtDNA escape. Involved in the regulation of mtDNA nucleotide structure and number. May have a dispensable role in early maturation of pre-rRNA (By similarity).</text>
</comment>
<comment type="subcellular location">
    <subcellularLocation>
        <location evidence="1">Mitochondrion inner membrane</location>
        <topology evidence="1">Single-pass membrane protein</topology>
    </subcellularLocation>
</comment>
<comment type="similarity">
    <text evidence="3">Belongs to the YME2 family.</text>
</comment>
<evidence type="ECO:0000250" key="1"/>
<evidence type="ECO:0000255" key="2"/>
<evidence type="ECO:0000305" key="3"/>
<proteinExistence type="inferred from homology"/>
<protein>
    <recommendedName>
        <fullName>Mitochondrial escape protein 2</fullName>
    </recommendedName>
</protein>
<sequence length="773" mass="88201">MNLFLSRFTGLRNTSFLGHARPFMFPRRYAHSLVAHNIGHIKLDPNEGLFFVDNLVNTPTYFYIQRYTALLFQNNLKKQLSAAFPSSDTMQLEDIIFRWQDGGAFLKVRYKEFPQDTEAVSEHVRESFRKRPVRTILHPFSTPIPHMVHGIPWLQDLYIFPSRTVDVNFEGPPLSQERLYSIFRTYGKLRSVTINSPTSATLSFSSLRSATSALNCMHGFVYGKTEFHMRYRHMNRFVAFKDWLFSHPRFTIPLVAAAITVLTASLFDPIRKFFVETNIVHGQKLRNINVVGWVKKKTRDIVLSPFHENGTNIKAPIWTTREKDCEQLKEWLDEALHSFIVVQGPRGSGKRDLVDRVVKERKNVLFFDCDRLFSTTNTEMFVSTLASQTGYFPLFSFLNNISSLIDMAAQGLIGQKTGIVSSSEGQVRQILNTTQTVLRSLALREHKEADTSVLDESEFLEVHADRLPVVILDNFQLRKLSNPMQRVVAEWAGNLVKEGIAHVLMLTPDVGGTKSLEQYVNGWENRTLLLGDADPVLAQRYVIESLPEEMQTEELRKELRVQLPKIGGRLRDLDYVARRLRVNSSSVSEAIGGIVSQNASDILQTFLRPASLTSEEKPTFTPEESWTLITYLSQHEYIPYHMLMLDPLFKGHDDAVRALEESELITITTVNARPDKVYAGKPVYVTAFRQLVNDPVLSANMQLVRCNALIGMANNAIKNDEQELQMLKDLGNLESGVKDRAHYLTTRIQKNQGVITDNEKSIERLTEALKKID</sequence>